<protein>
    <recommendedName>
        <fullName evidence="1">7-cyano-7-deazaguanine synthase</fullName>
        <ecNumber evidence="1">6.3.4.20</ecNumber>
    </recommendedName>
    <alternativeName>
        <fullName evidence="1">7-cyano-7-carbaguanine synthase</fullName>
    </alternativeName>
    <alternativeName>
        <fullName evidence="1">PreQ(0) synthase</fullName>
    </alternativeName>
    <alternativeName>
        <fullName evidence="1">Queuosine biosynthesis protein QueC</fullName>
    </alternativeName>
</protein>
<feature type="chain" id="PRO_1000069757" description="7-cyano-7-deazaguanine synthase">
    <location>
        <begin position="1"/>
        <end position="244"/>
    </location>
</feature>
<feature type="binding site" evidence="1">
    <location>
        <begin position="14"/>
        <end position="24"/>
    </location>
    <ligand>
        <name>ATP</name>
        <dbReference type="ChEBI" id="CHEBI:30616"/>
    </ligand>
</feature>
<feature type="binding site" evidence="1">
    <location>
        <position position="202"/>
    </location>
    <ligand>
        <name>Zn(2+)</name>
        <dbReference type="ChEBI" id="CHEBI:29105"/>
    </ligand>
</feature>
<feature type="binding site" evidence="1">
    <location>
        <position position="217"/>
    </location>
    <ligand>
        <name>Zn(2+)</name>
        <dbReference type="ChEBI" id="CHEBI:29105"/>
    </ligand>
</feature>
<feature type="binding site" evidence="1">
    <location>
        <position position="220"/>
    </location>
    <ligand>
        <name>Zn(2+)</name>
        <dbReference type="ChEBI" id="CHEBI:29105"/>
    </ligand>
</feature>
<feature type="binding site" evidence="1">
    <location>
        <position position="223"/>
    </location>
    <ligand>
        <name>Zn(2+)</name>
        <dbReference type="ChEBI" id="CHEBI:29105"/>
    </ligand>
</feature>
<organism>
    <name type="scientific">Burkholderia pseudomallei (strain 1106a)</name>
    <dbReference type="NCBI Taxonomy" id="357348"/>
    <lineage>
        <taxon>Bacteria</taxon>
        <taxon>Pseudomonadati</taxon>
        <taxon>Pseudomonadota</taxon>
        <taxon>Betaproteobacteria</taxon>
        <taxon>Burkholderiales</taxon>
        <taxon>Burkholderiaceae</taxon>
        <taxon>Burkholderia</taxon>
        <taxon>pseudomallei group</taxon>
    </lineage>
</organism>
<reference key="1">
    <citation type="journal article" date="2010" name="Genome Biol. Evol.">
        <title>Continuing evolution of Burkholderia mallei through genome reduction and large-scale rearrangements.</title>
        <authorList>
            <person name="Losada L."/>
            <person name="Ronning C.M."/>
            <person name="DeShazer D."/>
            <person name="Woods D."/>
            <person name="Fedorova N."/>
            <person name="Kim H.S."/>
            <person name="Shabalina S.A."/>
            <person name="Pearson T.R."/>
            <person name="Brinkac L."/>
            <person name="Tan P."/>
            <person name="Nandi T."/>
            <person name="Crabtree J."/>
            <person name="Badger J."/>
            <person name="Beckstrom-Sternberg S."/>
            <person name="Saqib M."/>
            <person name="Schutzer S.E."/>
            <person name="Keim P."/>
            <person name="Nierman W.C."/>
        </authorList>
    </citation>
    <scope>NUCLEOTIDE SEQUENCE [LARGE SCALE GENOMIC DNA]</scope>
    <source>
        <strain>1106a</strain>
    </source>
</reference>
<name>QUEC_BURP0</name>
<gene>
    <name evidence="1" type="primary">queC</name>
    <name type="ordered locus">BURPS1106A_0171</name>
</gene>
<evidence type="ECO:0000255" key="1">
    <source>
        <dbReference type="HAMAP-Rule" id="MF_01633"/>
    </source>
</evidence>
<sequence>MIRTDAKDGALVLFSGGQDSATCVAWALERYQTVETLGFDYGQRHRVELECREGVRDALKRRFPQWSHKLGDDHLIDLSVLGSISDTAMTRAIEIETASNGLPNTFVPGRNLLFMTIAAAIAYRRGLRALVGGMCETDFSGYPDCRDDTMKALQVALNLGMDTRFVLETPLMWLDKADTWRLAEQLGGAPLVELIRVETHTCYVGERSELHDWGFGCGECPACKLRKRGYDAYLRGESVTEAPA</sequence>
<proteinExistence type="inferred from homology"/>
<comment type="function">
    <text evidence="1">Catalyzes the ATP-dependent conversion of 7-carboxy-7-deazaguanine (CDG) to 7-cyano-7-deazaguanine (preQ(0)).</text>
</comment>
<comment type="catalytic activity">
    <reaction evidence="1">
        <text>7-carboxy-7-deazaguanine + NH4(+) + ATP = 7-cyano-7-deazaguanine + ADP + phosphate + H2O + H(+)</text>
        <dbReference type="Rhea" id="RHEA:27982"/>
        <dbReference type="ChEBI" id="CHEBI:15377"/>
        <dbReference type="ChEBI" id="CHEBI:15378"/>
        <dbReference type="ChEBI" id="CHEBI:28938"/>
        <dbReference type="ChEBI" id="CHEBI:30616"/>
        <dbReference type="ChEBI" id="CHEBI:43474"/>
        <dbReference type="ChEBI" id="CHEBI:45075"/>
        <dbReference type="ChEBI" id="CHEBI:61036"/>
        <dbReference type="ChEBI" id="CHEBI:456216"/>
        <dbReference type="EC" id="6.3.4.20"/>
    </reaction>
</comment>
<comment type="cofactor">
    <cofactor evidence="1">
        <name>Zn(2+)</name>
        <dbReference type="ChEBI" id="CHEBI:29105"/>
    </cofactor>
    <text evidence="1">Binds 1 zinc ion per subunit.</text>
</comment>
<comment type="pathway">
    <text evidence="1">Purine metabolism; 7-cyano-7-deazaguanine biosynthesis.</text>
</comment>
<comment type="similarity">
    <text evidence="1">Belongs to the QueC family.</text>
</comment>
<accession>A3NQ33</accession>
<dbReference type="EC" id="6.3.4.20" evidence="1"/>
<dbReference type="EMBL" id="CP000572">
    <property type="protein sequence ID" value="ABN92458.1"/>
    <property type="molecule type" value="Genomic_DNA"/>
</dbReference>
<dbReference type="RefSeq" id="WP_004190026.1">
    <property type="nucleotide sequence ID" value="NC_009076.1"/>
</dbReference>
<dbReference type="SMR" id="A3NQ33"/>
<dbReference type="GeneID" id="93058685"/>
<dbReference type="KEGG" id="bpl:BURPS1106A_0171"/>
<dbReference type="HOGENOM" id="CLU_081854_0_0_4"/>
<dbReference type="UniPathway" id="UPA00391"/>
<dbReference type="Proteomes" id="UP000006738">
    <property type="component" value="Chromosome I"/>
</dbReference>
<dbReference type="GO" id="GO:0005524">
    <property type="term" value="F:ATP binding"/>
    <property type="evidence" value="ECO:0007669"/>
    <property type="project" value="UniProtKB-UniRule"/>
</dbReference>
<dbReference type="GO" id="GO:0016879">
    <property type="term" value="F:ligase activity, forming carbon-nitrogen bonds"/>
    <property type="evidence" value="ECO:0007669"/>
    <property type="project" value="UniProtKB-UniRule"/>
</dbReference>
<dbReference type="GO" id="GO:0008270">
    <property type="term" value="F:zinc ion binding"/>
    <property type="evidence" value="ECO:0007669"/>
    <property type="project" value="UniProtKB-UniRule"/>
</dbReference>
<dbReference type="GO" id="GO:0008616">
    <property type="term" value="P:queuosine biosynthetic process"/>
    <property type="evidence" value="ECO:0007669"/>
    <property type="project" value="UniProtKB-UniRule"/>
</dbReference>
<dbReference type="CDD" id="cd01995">
    <property type="entry name" value="QueC-like"/>
    <property type="match status" value="1"/>
</dbReference>
<dbReference type="Gene3D" id="3.40.50.620">
    <property type="entry name" value="HUPs"/>
    <property type="match status" value="1"/>
</dbReference>
<dbReference type="HAMAP" id="MF_01633">
    <property type="entry name" value="QueC"/>
    <property type="match status" value="1"/>
</dbReference>
<dbReference type="InterPro" id="IPR018317">
    <property type="entry name" value="QueC"/>
</dbReference>
<dbReference type="InterPro" id="IPR014729">
    <property type="entry name" value="Rossmann-like_a/b/a_fold"/>
</dbReference>
<dbReference type="NCBIfam" id="TIGR00364">
    <property type="entry name" value="7-cyano-7-deazaguanine synthase QueC"/>
    <property type="match status" value="1"/>
</dbReference>
<dbReference type="PANTHER" id="PTHR42914">
    <property type="entry name" value="7-CYANO-7-DEAZAGUANINE SYNTHASE"/>
    <property type="match status" value="1"/>
</dbReference>
<dbReference type="PANTHER" id="PTHR42914:SF1">
    <property type="entry name" value="7-CYANO-7-DEAZAGUANINE SYNTHASE"/>
    <property type="match status" value="1"/>
</dbReference>
<dbReference type="Pfam" id="PF06508">
    <property type="entry name" value="QueC"/>
    <property type="match status" value="1"/>
</dbReference>
<dbReference type="PIRSF" id="PIRSF006293">
    <property type="entry name" value="ExsB"/>
    <property type="match status" value="1"/>
</dbReference>
<dbReference type="SUPFAM" id="SSF52402">
    <property type="entry name" value="Adenine nucleotide alpha hydrolases-like"/>
    <property type="match status" value="1"/>
</dbReference>
<keyword id="KW-0067">ATP-binding</keyword>
<keyword id="KW-0436">Ligase</keyword>
<keyword id="KW-0479">Metal-binding</keyword>
<keyword id="KW-0547">Nucleotide-binding</keyword>
<keyword id="KW-0671">Queuosine biosynthesis</keyword>
<keyword id="KW-0862">Zinc</keyword>